<sequence>MQELSQLGGYFQKLAAGGFVINPSSSSSSSNNSSSNTSSSNFLSPYEYQESSTSPRDTTDSSGESSLSSSGSSSSLNGSCNVAAKLIKFRGHNVAAFDINGKEMICLPQVYEVFLKNMVGGLHTVYTKLKRLYIHPMVCNVEQVRALRSLGAIQPGVNRCKLLKTSDFEKLYDDCTSTCTRPGRPSKRSFDDWNNGAVIIKKDKTDSEPVNGPVFNQLMQPQMTPQQILMQHFVALSQKTKNSFERADDDDQNQRDADDITPLNLSKSGGNSENDSDSLENMRKEDSSPNTSVSDRGGSNSNSLSMSMEAGSSSSSGKNDEASMMNKVMSLIELASQQFKHEREELWKERSEIQVLRESFHKIVQEERDLRKKLETQNKKCTAFEKRYKYVKKQLLLANADLRRYKEKEEQSSDGNSVEL</sequence>
<accession>H2KY91</accession>
<accession>Q86GT3</accession>
<proteinExistence type="evidence at transcript level"/>
<reference evidence="5" key="1">
    <citation type="journal article" date="1998" name="Science">
        <title>Genome sequence of the nematode C. elegans: a platform for investigating biology.</title>
        <authorList>
            <consortium name="The C. elegans sequencing consortium"/>
        </authorList>
    </citation>
    <scope>NUCLEOTIDE SEQUENCE [LARGE SCALE GENOMIC DNA]</scope>
    <source>
        <strain evidence="5">Bristol N2</strain>
    </source>
</reference>
<reference evidence="4" key="2">
    <citation type="journal article" date="2004" name="Curr. Biol.">
        <title>Identification of thermosensory and olfactory neuron-specific genes via expression profiling of single neuron types.</title>
        <authorList>
            <person name="Colosimo M.E."/>
            <person name="Brown A."/>
            <person name="Mukhopadhyay S."/>
            <person name="Gabel C."/>
            <person name="Lanjuin A.E."/>
            <person name="Samuel A.D."/>
            <person name="Sengupta P."/>
        </authorList>
    </citation>
    <scope>FUNCTION</scope>
    <scope>SUBCELLULAR LOCATION</scope>
    <scope>TISSUE SPECIFICITY</scope>
</reference>
<keyword id="KW-0025">Alternative splicing</keyword>
<keyword id="KW-0539">Nucleus</keyword>
<keyword id="KW-1185">Reference proteome</keyword>
<protein>
    <recommendedName>
        <fullName evidence="4">Dachshund homolog dac-1</fullName>
    </recommendedName>
</protein>
<organism evidence="5">
    <name type="scientific">Caenorhabditis elegans</name>
    <dbReference type="NCBI Taxonomy" id="6239"/>
    <lineage>
        <taxon>Eukaryota</taxon>
        <taxon>Metazoa</taxon>
        <taxon>Ecdysozoa</taxon>
        <taxon>Nematoda</taxon>
        <taxon>Chromadorea</taxon>
        <taxon>Rhabditida</taxon>
        <taxon>Rhabditina</taxon>
        <taxon>Rhabditomorpha</taxon>
        <taxon>Rhabditoidea</taxon>
        <taxon>Rhabditidae</taxon>
        <taxon>Peloderinae</taxon>
        <taxon>Caenorhabditis</taxon>
    </lineage>
</organism>
<comment type="function">
    <text evidence="1 3">Transcription factor (By similarity). Plays a role in the thermotactic response (PubMed:15620651).</text>
</comment>
<comment type="subcellular location">
    <subcellularLocation>
        <location evidence="3">Nucleus</location>
    </subcellularLocation>
</comment>
<comment type="alternative products">
    <event type="alternative splicing"/>
    <isoform>
        <id>H2KY91-1</id>
        <name evidence="6">a</name>
        <sequence type="displayed"/>
    </isoform>
    <isoform>
        <id>H2KY91-2</id>
        <name evidence="7">b</name>
        <sequence type="described" ref="VSP_061105"/>
    </isoform>
</comment>
<comment type="tissue specificity">
    <text evidence="3">Expressed in AFD, AWC, ASE and ASK neurons (PubMed:15620651). Expressed in the alae (PubMed:15620651).</text>
</comment>
<comment type="similarity">
    <text evidence="4">Belongs to the DACH/dachshund family.</text>
</comment>
<name>DAC1_CAEEL</name>
<gene>
    <name evidence="6" type="primary">dac-1</name>
    <name evidence="6" type="ORF">B0412.1</name>
</gene>
<feature type="chain" id="PRO_0000453151" description="Dachshund homolog dac-1">
    <location>
        <begin position="1"/>
        <end position="420"/>
    </location>
</feature>
<feature type="region of interest" description="Disordered" evidence="2">
    <location>
        <begin position="23"/>
        <end position="77"/>
    </location>
</feature>
<feature type="region of interest" description="DACHbox-N" evidence="1">
    <location>
        <begin position="85"/>
        <end position="171"/>
    </location>
</feature>
<feature type="region of interest" description="Disordered" evidence="2">
    <location>
        <begin position="242"/>
        <end position="321"/>
    </location>
</feature>
<feature type="compositionally biased region" description="Low complexity" evidence="2">
    <location>
        <begin position="24"/>
        <end position="41"/>
    </location>
</feature>
<feature type="compositionally biased region" description="Low complexity" evidence="2">
    <location>
        <begin position="51"/>
        <end position="77"/>
    </location>
</feature>
<feature type="compositionally biased region" description="Basic and acidic residues" evidence="2">
    <location>
        <begin position="242"/>
        <end position="258"/>
    </location>
</feature>
<feature type="compositionally biased region" description="Polar residues" evidence="2">
    <location>
        <begin position="263"/>
        <end position="273"/>
    </location>
</feature>
<feature type="compositionally biased region" description="Low complexity" evidence="2">
    <location>
        <begin position="297"/>
        <end position="317"/>
    </location>
</feature>
<feature type="splice variant" id="VSP_061105" description="In isoform b." evidence="4">
    <location>
        <begin position="1"/>
        <end position="103"/>
    </location>
</feature>
<evidence type="ECO:0000250" key="1">
    <source>
        <dbReference type="UniProtKB" id="Q9UI36"/>
    </source>
</evidence>
<evidence type="ECO:0000256" key="2">
    <source>
        <dbReference type="SAM" id="MobiDB-lite"/>
    </source>
</evidence>
<evidence type="ECO:0000269" key="3">
    <source>
    </source>
</evidence>
<evidence type="ECO:0000305" key="4"/>
<evidence type="ECO:0000312" key="5">
    <source>
        <dbReference type="Proteomes" id="UP000001940"/>
    </source>
</evidence>
<evidence type="ECO:0000312" key="6">
    <source>
        <dbReference type="WormBase" id="B0412.1a"/>
    </source>
</evidence>
<evidence type="ECO:0000312" key="7">
    <source>
        <dbReference type="WormBase" id="B0412.1b"/>
    </source>
</evidence>
<dbReference type="EMBL" id="BX284603">
    <property type="protein sequence ID" value="CCD61864.1"/>
    <property type="molecule type" value="Genomic_DNA"/>
</dbReference>
<dbReference type="EMBL" id="BX284603">
    <property type="protein sequence ID" value="CCD61865.1"/>
    <property type="molecule type" value="Genomic_DNA"/>
</dbReference>
<dbReference type="RefSeq" id="NP_001021129.1">
    <molecule id="H2KY91-1"/>
    <property type="nucleotide sequence ID" value="NM_001025958.4"/>
</dbReference>
<dbReference type="RefSeq" id="NP_001021130.1">
    <molecule id="H2KY91-2"/>
    <property type="nucleotide sequence ID" value="NM_001025959.5"/>
</dbReference>
<dbReference type="SMR" id="H2KY91"/>
<dbReference type="FunCoup" id="H2KY91">
    <property type="interactions" value="11"/>
</dbReference>
<dbReference type="IntAct" id="H2KY91">
    <property type="interactions" value="6"/>
</dbReference>
<dbReference type="STRING" id="6239.B0412.1a.1"/>
<dbReference type="PaxDb" id="6239-B0412.1a"/>
<dbReference type="EnsemblMetazoa" id="B0412.1a.1">
    <molecule id="H2KY91-1"/>
    <property type="protein sequence ID" value="B0412.1a.1"/>
    <property type="gene ID" value="WBGene00000895"/>
</dbReference>
<dbReference type="EnsemblMetazoa" id="B0412.1b.1">
    <molecule id="H2KY91-2"/>
    <property type="protein sequence ID" value="B0412.1b.1"/>
    <property type="gene ID" value="WBGene00000895"/>
</dbReference>
<dbReference type="GeneID" id="175238"/>
<dbReference type="KEGG" id="cel:CELE_B0412.1"/>
<dbReference type="UCSC" id="B0412.1a">
    <property type="organism name" value="c. elegans"/>
</dbReference>
<dbReference type="AGR" id="WB:WBGene00000895"/>
<dbReference type="CTD" id="175238"/>
<dbReference type="WormBase" id="B0412.1a">
    <molecule id="H2KY91-1"/>
    <property type="protein sequence ID" value="CE26848"/>
    <property type="gene ID" value="WBGene00000895"/>
    <property type="gene designation" value="dac-1"/>
</dbReference>
<dbReference type="WormBase" id="B0412.1b">
    <molecule id="H2KY91-2"/>
    <property type="protein sequence ID" value="CE33550"/>
    <property type="gene ID" value="WBGene00000895"/>
    <property type="gene designation" value="dac-1"/>
</dbReference>
<dbReference type="eggNOG" id="KOG3915">
    <property type="taxonomic scope" value="Eukaryota"/>
</dbReference>
<dbReference type="GeneTree" id="ENSGT00390000001134"/>
<dbReference type="HOGENOM" id="CLU_054108_0_0_1"/>
<dbReference type="InParanoid" id="H2KY91"/>
<dbReference type="OMA" id="KEMICLP"/>
<dbReference type="OrthoDB" id="6436112at2759"/>
<dbReference type="SignaLink" id="H2KY91"/>
<dbReference type="PRO" id="PR:H2KY91"/>
<dbReference type="Proteomes" id="UP000001940">
    <property type="component" value="Chromosome III"/>
</dbReference>
<dbReference type="Bgee" id="WBGene00000895">
    <property type="expression patterns" value="Expressed in larva and 3 other cell types or tissues"/>
</dbReference>
<dbReference type="ExpressionAtlas" id="H2KY91">
    <property type="expression patterns" value="baseline and differential"/>
</dbReference>
<dbReference type="GO" id="GO:0005634">
    <property type="term" value="C:nucleus"/>
    <property type="evidence" value="ECO:0000314"/>
    <property type="project" value="UniProtKB"/>
</dbReference>
<dbReference type="GO" id="GO:0005667">
    <property type="term" value="C:transcription regulator complex"/>
    <property type="evidence" value="ECO:0000318"/>
    <property type="project" value="GO_Central"/>
</dbReference>
<dbReference type="GO" id="GO:0000981">
    <property type="term" value="F:DNA-binding transcription factor activity, RNA polymerase II-specific"/>
    <property type="evidence" value="ECO:0000318"/>
    <property type="project" value="GO_Central"/>
</dbReference>
<dbReference type="GO" id="GO:0000978">
    <property type="term" value="F:RNA polymerase II cis-regulatory region sequence-specific DNA binding"/>
    <property type="evidence" value="ECO:0000318"/>
    <property type="project" value="GO_Central"/>
</dbReference>
<dbReference type="GO" id="GO:0006357">
    <property type="term" value="P:regulation of transcription by RNA polymerase II"/>
    <property type="evidence" value="ECO:0000318"/>
    <property type="project" value="GO_Central"/>
</dbReference>
<dbReference type="GO" id="GO:0043052">
    <property type="term" value="P:thermotaxis"/>
    <property type="evidence" value="ECO:0000315"/>
    <property type="project" value="UniProtKB"/>
</dbReference>
<dbReference type="CDD" id="cd21081">
    <property type="entry name" value="DHD_Dac"/>
    <property type="match status" value="1"/>
</dbReference>
<dbReference type="FunFam" id="3.10.260.20:FF:000001">
    <property type="entry name" value="Dachshund homolog 1"/>
    <property type="match status" value="1"/>
</dbReference>
<dbReference type="Gene3D" id="3.10.260.20">
    <property type="entry name" value="Ski"/>
    <property type="match status" value="1"/>
</dbReference>
<dbReference type="InterPro" id="IPR052417">
    <property type="entry name" value="Dachshund_domain"/>
</dbReference>
<dbReference type="InterPro" id="IPR009061">
    <property type="entry name" value="DNA-bd_dom_put_sf"/>
</dbReference>
<dbReference type="InterPro" id="IPR003380">
    <property type="entry name" value="SKI/SNO/DAC"/>
</dbReference>
<dbReference type="InterPro" id="IPR037000">
    <property type="entry name" value="Ski_DNA-bd_sf"/>
</dbReference>
<dbReference type="PANTHER" id="PTHR12577">
    <property type="entry name" value="DACHSHUND"/>
    <property type="match status" value="1"/>
</dbReference>
<dbReference type="PANTHER" id="PTHR12577:SF6">
    <property type="entry name" value="DACHSHUND, ISOFORM B"/>
    <property type="match status" value="1"/>
</dbReference>
<dbReference type="Pfam" id="PF02437">
    <property type="entry name" value="Ski_Sno_DHD"/>
    <property type="match status" value="1"/>
</dbReference>
<dbReference type="SUPFAM" id="SSF46955">
    <property type="entry name" value="Putative DNA-binding domain"/>
    <property type="match status" value="1"/>
</dbReference>